<sequence length="420" mass="45991">MVDRWYNIAADLPGVLAPPKDPDEGESRIALLTRILPSALIDQEFTAERWVPIPEEVREVYRRVGRPTPLLRAEGFERALGTKVHIYYKYEGVLPVGSHKLNTAVAQAYYAKADGAVEVATETGAGQWGMAVSLAAALFGLKATVFMTRSSYNSKRQRLVFMRAYGATVYPSPSEVTETGRRHFRPDHPGSLGIAISEAVEYVLSGERRKYLPGSVMEFVLLHQTVIGLEAMRQLPEEPDYAVACVGGGSNFGGFTYPMLGAKLRGEGFGKTKFLAVESAAAPKLTRGEYRYDFPDATGILPLIKMYTLGHDYVPPPVHAAGLRYHGAAPSLSLLKRLGHVEAVAYGQEEVMEAALLFARSEGVLPAPESAHAVRAVIYLAKKLPPGSVVVFNMSGHGLLDVDAYEKALEWEKIYKHPED</sequence>
<keyword id="KW-0028">Amino-acid biosynthesis</keyword>
<keyword id="KW-0057">Aromatic amino acid biosynthesis</keyword>
<keyword id="KW-0456">Lyase</keyword>
<keyword id="KW-0663">Pyridoxal phosphate</keyword>
<keyword id="KW-0822">Tryptophan biosynthesis</keyword>
<evidence type="ECO:0000255" key="1">
    <source>
        <dbReference type="HAMAP-Rule" id="MF_00133"/>
    </source>
</evidence>
<comment type="function">
    <text evidence="1">The beta subunit is responsible for the synthesis of L-tryptophan from indole and L-serine.</text>
</comment>
<comment type="catalytic activity">
    <reaction evidence="1">
        <text>(1S,2R)-1-C-(indol-3-yl)glycerol 3-phosphate + L-serine = D-glyceraldehyde 3-phosphate + L-tryptophan + H2O</text>
        <dbReference type="Rhea" id="RHEA:10532"/>
        <dbReference type="ChEBI" id="CHEBI:15377"/>
        <dbReference type="ChEBI" id="CHEBI:33384"/>
        <dbReference type="ChEBI" id="CHEBI:57912"/>
        <dbReference type="ChEBI" id="CHEBI:58866"/>
        <dbReference type="ChEBI" id="CHEBI:59776"/>
        <dbReference type="EC" id="4.2.1.20"/>
    </reaction>
</comment>
<comment type="cofactor">
    <cofactor evidence="1">
        <name>pyridoxal 5'-phosphate</name>
        <dbReference type="ChEBI" id="CHEBI:597326"/>
    </cofactor>
</comment>
<comment type="pathway">
    <text evidence="1">Amino-acid biosynthesis; L-tryptophan biosynthesis; L-tryptophan from chorismate: step 5/5.</text>
</comment>
<comment type="subunit">
    <text evidence="1">Tetramer of two alpha and two beta chains.</text>
</comment>
<comment type="similarity">
    <text evidence="1">Belongs to the TrpB family.</text>
</comment>
<accession>A1RVT1</accession>
<gene>
    <name evidence="1" type="primary">trpB</name>
    <name type="ordered locus">Pisl_1916</name>
</gene>
<reference key="1">
    <citation type="submission" date="2006-12" db="EMBL/GenBank/DDBJ databases">
        <title>Complete sequence of Pyrobaculum islandicum DSM 4184.</title>
        <authorList>
            <person name="Copeland A."/>
            <person name="Lucas S."/>
            <person name="Lapidus A."/>
            <person name="Barry K."/>
            <person name="Detter J.C."/>
            <person name="Glavina del Rio T."/>
            <person name="Dalin E."/>
            <person name="Tice H."/>
            <person name="Pitluck S."/>
            <person name="Meincke L."/>
            <person name="Brettin T."/>
            <person name="Bruce D."/>
            <person name="Han C."/>
            <person name="Tapia R."/>
            <person name="Gilna P."/>
            <person name="Schmutz J."/>
            <person name="Larimer F."/>
            <person name="Land M."/>
            <person name="Hauser L."/>
            <person name="Kyrpides N."/>
            <person name="Mikhailova N."/>
            <person name="Cozen A.E."/>
            <person name="Fitz-Gibbon S.T."/>
            <person name="House C.H."/>
            <person name="Saltikov C."/>
            <person name="Lowe T."/>
            <person name="Richardson P."/>
        </authorList>
    </citation>
    <scope>NUCLEOTIDE SEQUENCE [LARGE SCALE GENOMIC DNA]</scope>
    <source>
        <strain>DSM 4184 / JCM 9189 / GEO3</strain>
    </source>
</reference>
<name>TRPB_PYRIL</name>
<proteinExistence type="inferred from homology"/>
<protein>
    <recommendedName>
        <fullName evidence="1">Tryptophan synthase beta chain</fullName>
        <ecNumber evidence="1">4.2.1.20</ecNumber>
    </recommendedName>
</protein>
<dbReference type="EC" id="4.2.1.20" evidence="1"/>
<dbReference type="EMBL" id="CP000504">
    <property type="protein sequence ID" value="ABL89063.1"/>
    <property type="molecule type" value="Genomic_DNA"/>
</dbReference>
<dbReference type="RefSeq" id="WP_011763638.1">
    <property type="nucleotide sequence ID" value="NC_008701.1"/>
</dbReference>
<dbReference type="SMR" id="A1RVT1"/>
<dbReference type="STRING" id="384616.Pisl_1916"/>
<dbReference type="GeneID" id="4617815"/>
<dbReference type="KEGG" id="pis:Pisl_1916"/>
<dbReference type="eggNOG" id="arCOG01432">
    <property type="taxonomic scope" value="Archaea"/>
</dbReference>
<dbReference type="HOGENOM" id="CLU_042858_1_0_2"/>
<dbReference type="OrthoDB" id="371827at2157"/>
<dbReference type="UniPathway" id="UPA00035">
    <property type="reaction ID" value="UER00044"/>
</dbReference>
<dbReference type="Proteomes" id="UP000002595">
    <property type="component" value="Chromosome"/>
</dbReference>
<dbReference type="GO" id="GO:0005737">
    <property type="term" value="C:cytoplasm"/>
    <property type="evidence" value="ECO:0007669"/>
    <property type="project" value="TreeGrafter"/>
</dbReference>
<dbReference type="GO" id="GO:0052684">
    <property type="term" value="F:L-serine hydro-lyase (adding indole, L-tryptophan-forming) activity"/>
    <property type="evidence" value="ECO:0007669"/>
    <property type="project" value="TreeGrafter"/>
</dbReference>
<dbReference type="GO" id="GO:0030170">
    <property type="term" value="F:pyridoxal phosphate binding"/>
    <property type="evidence" value="ECO:0007669"/>
    <property type="project" value="InterPro"/>
</dbReference>
<dbReference type="GO" id="GO:0004834">
    <property type="term" value="F:tryptophan synthase activity"/>
    <property type="evidence" value="ECO:0007669"/>
    <property type="project" value="UniProtKB-UniRule"/>
</dbReference>
<dbReference type="Gene3D" id="3.40.50.1100">
    <property type="match status" value="2"/>
</dbReference>
<dbReference type="HAMAP" id="MF_00133">
    <property type="entry name" value="Trp_synth_beta"/>
    <property type="match status" value="1"/>
</dbReference>
<dbReference type="InterPro" id="IPR006316">
    <property type="entry name" value="Trp_synth_b-like"/>
</dbReference>
<dbReference type="InterPro" id="IPR006653">
    <property type="entry name" value="Trp_synth_b_CS"/>
</dbReference>
<dbReference type="InterPro" id="IPR023026">
    <property type="entry name" value="Trp_synth_beta/beta-like"/>
</dbReference>
<dbReference type="InterPro" id="IPR001926">
    <property type="entry name" value="TrpB-like_PALP"/>
</dbReference>
<dbReference type="InterPro" id="IPR036052">
    <property type="entry name" value="TrpB-like_PALP_sf"/>
</dbReference>
<dbReference type="NCBIfam" id="NF009057">
    <property type="entry name" value="PRK12391.1"/>
    <property type="match status" value="1"/>
</dbReference>
<dbReference type="NCBIfam" id="TIGR01415">
    <property type="entry name" value="trpB_rel"/>
    <property type="match status" value="1"/>
</dbReference>
<dbReference type="PANTHER" id="PTHR48077:SF6">
    <property type="entry name" value="TRYPTOPHAN SYNTHASE"/>
    <property type="match status" value="1"/>
</dbReference>
<dbReference type="PANTHER" id="PTHR48077">
    <property type="entry name" value="TRYPTOPHAN SYNTHASE-RELATED"/>
    <property type="match status" value="1"/>
</dbReference>
<dbReference type="Pfam" id="PF00291">
    <property type="entry name" value="PALP"/>
    <property type="match status" value="1"/>
</dbReference>
<dbReference type="PIRSF" id="PIRSF001413">
    <property type="entry name" value="Trp_syn_beta"/>
    <property type="match status" value="1"/>
</dbReference>
<dbReference type="PIRSF" id="PIRSF500824">
    <property type="entry name" value="TrpB_prok"/>
    <property type="match status" value="1"/>
</dbReference>
<dbReference type="SUPFAM" id="SSF53686">
    <property type="entry name" value="Tryptophan synthase beta subunit-like PLP-dependent enzymes"/>
    <property type="match status" value="1"/>
</dbReference>
<dbReference type="PROSITE" id="PS00168">
    <property type="entry name" value="TRP_SYNTHASE_BETA"/>
    <property type="match status" value="1"/>
</dbReference>
<feature type="chain" id="PRO_1000095805" description="Tryptophan synthase beta chain">
    <location>
        <begin position="1"/>
        <end position="420"/>
    </location>
</feature>
<feature type="modified residue" description="N6-(pyridoxal phosphate)lysine" evidence="1">
    <location>
        <position position="100"/>
    </location>
</feature>
<organism>
    <name type="scientific">Pyrobaculum islandicum (strain DSM 4184 / JCM 9189 / GEO3)</name>
    <dbReference type="NCBI Taxonomy" id="384616"/>
    <lineage>
        <taxon>Archaea</taxon>
        <taxon>Thermoproteota</taxon>
        <taxon>Thermoprotei</taxon>
        <taxon>Thermoproteales</taxon>
        <taxon>Thermoproteaceae</taxon>
        <taxon>Pyrobaculum</taxon>
    </lineage>
</organism>